<keyword id="KW-1003">Cell membrane</keyword>
<keyword id="KW-0407">Ion channel</keyword>
<keyword id="KW-0406">Ion transport</keyword>
<keyword id="KW-0472">Membrane</keyword>
<keyword id="KW-0479">Metal-binding</keyword>
<keyword id="KW-1185">Reference proteome</keyword>
<keyword id="KW-0915">Sodium</keyword>
<keyword id="KW-0812">Transmembrane</keyword>
<keyword id="KW-1133">Transmembrane helix</keyword>
<keyword id="KW-0813">Transport</keyword>
<evidence type="ECO:0000255" key="1">
    <source>
        <dbReference type="HAMAP-Rule" id="MF_00454"/>
    </source>
</evidence>
<proteinExistence type="inferred from homology"/>
<feature type="chain" id="PRO_0000110116" description="Fluoride-specific ion channel FluC 1">
    <location>
        <begin position="1"/>
        <end position="116"/>
    </location>
</feature>
<feature type="transmembrane region" description="Helical" evidence="1">
    <location>
        <begin position="2"/>
        <end position="22"/>
    </location>
</feature>
<feature type="transmembrane region" description="Helical" evidence="1">
    <location>
        <begin position="33"/>
        <end position="53"/>
    </location>
</feature>
<feature type="transmembrane region" description="Helical" evidence="1">
    <location>
        <begin position="63"/>
        <end position="83"/>
    </location>
</feature>
<feature type="transmembrane region" description="Helical" evidence="1">
    <location>
        <begin position="96"/>
        <end position="116"/>
    </location>
</feature>
<feature type="binding site" evidence="1">
    <location>
        <position position="71"/>
    </location>
    <ligand>
        <name>Na(+)</name>
        <dbReference type="ChEBI" id="CHEBI:29101"/>
        <note>structural</note>
    </ligand>
</feature>
<feature type="binding site" evidence="1">
    <location>
        <position position="74"/>
    </location>
    <ligand>
        <name>Na(+)</name>
        <dbReference type="ChEBI" id="CHEBI:29101"/>
        <note>structural</note>
    </ligand>
</feature>
<reference key="1">
    <citation type="journal article" date="2003" name="Proc. Natl. Acad. Sci. U.S.A.">
        <title>Complete genome sequence of Lactobacillus plantarum WCFS1.</title>
        <authorList>
            <person name="Kleerebezem M."/>
            <person name="Boekhorst J."/>
            <person name="van Kranenburg R."/>
            <person name="Molenaar D."/>
            <person name="Kuipers O.P."/>
            <person name="Leer R."/>
            <person name="Tarchini R."/>
            <person name="Peters S.A."/>
            <person name="Sandbrink H.M."/>
            <person name="Fiers M.W.E.J."/>
            <person name="Stiekema W."/>
            <person name="Klein Lankhorst R.M."/>
            <person name="Bron P.A."/>
            <person name="Hoffer S.M."/>
            <person name="Nierop Groot M.N."/>
            <person name="Kerkhoven R."/>
            <person name="De Vries M."/>
            <person name="Ursing B."/>
            <person name="De Vos W.M."/>
            <person name="Siezen R.J."/>
        </authorList>
    </citation>
    <scope>NUCLEOTIDE SEQUENCE [LARGE SCALE GENOMIC DNA]</scope>
    <source>
        <strain>ATCC BAA-793 / NCIMB 8826 / WCFS1</strain>
    </source>
</reference>
<reference key="2">
    <citation type="journal article" date="2012" name="J. Bacteriol.">
        <title>Complete resequencing and reannotation of the Lactobacillus plantarum WCFS1 genome.</title>
        <authorList>
            <person name="Siezen R.J."/>
            <person name="Francke C."/>
            <person name="Renckens B."/>
            <person name="Boekhorst J."/>
            <person name="Wels M."/>
            <person name="Kleerebezem M."/>
            <person name="van Hijum S.A."/>
        </authorList>
    </citation>
    <scope>NUCLEOTIDE SEQUENCE [LARGE SCALE GENOMIC DNA]</scope>
    <scope>GENOME REANNOTATION</scope>
    <source>
        <strain>ATCC BAA-793 / NCIMB 8826 / WCFS1</strain>
    </source>
</reference>
<protein>
    <recommendedName>
        <fullName evidence="1">Fluoride-specific ion channel FluC 1</fullName>
    </recommendedName>
</protein>
<gene>
    <name evidence="1" type="primary">fluC1</name>
    <name evidence="1" type="synonym">crcB1</name>
    <name type="ordered locus">lp_0213</name>
</gene>
<name>FLUC1_LACPL</name>
<dbReference type="EMBL" id="AL935263">
    <property type="protein sequence ID" value="CCC77749.1"/>
    <property type="molecule type" value="Genomic_DNA"/>
</dbReference>
<dbReference type="RefSeq" id="WP_003641805.1">
    <property type="nucleotide sequence ID" value="NC_004567.2"/>
</dbReference>
<dbReference type="RefSeq" id="YP_004888263.1">
    <property type="nucleotide sequence ID" value="NC_004567.2"/>
</dbReference>
<dbReference type="SMR" id="Q88ZT8"/>
<dbReference type="STRING" id="220668.lp_0213"/>
<dbReference type="EnsemblBacteria" id="CCC77749">
    <property type="protein sequence ID" value="CCC77749"/>
    <property type="gene ID" value="lp_0213"/>
</dbReference>
<dbReference type="KEGG" id="lpl:lp_0213"/>
<dbReference type="PATRIC" id="fig|220668.9.peg.176"/>
<dbReference type="eggNOG" id="COG0239">
    <property type="taxonomic scope" value="Bacteria"/>
</dbReference>
<dbReference type="HOGENOM" id="CLU_114342_2_3_9"/>
<dbReference type="OrthoDB" id="9815830at2"/>
<dbReference type="PhylomeDB" id="Q88ZT8"/>
<dbReference type="Proteomes" id="UP000000432">
    <property type="component" value="Chromosome"/>
</dbReference>
<dbReference type="GO" id="GO:0005886">
    <property type="term" value="C:plasma membrane"/>
    <property type="evidence" value="ECO:0007669"/>
    <property type="project" value="UniProtKB-SubCell"/>
</dbReference>
<dbReference type="GO" id="GO:0062054">
    <property type="term" value="F:fluoride channel activity"/>
    <property type="evidence" value="ECO:0007669"/>
    <property type="project" value="UniProtKB-UniRule"/>
</dbReference>
<dbReference type="GO" id="GO:0046872">
    <property type="term" value="F:metal ion binding"/>
    <property type="evidence" value="ECO:0007669"/>
    <property type="project" value="UniProtKB-KW"/>
</dbReference>
<dbReference type="GO" id="GO:0140114">
    <property type="term" value="P:cellular detoxification of fluoride"/>
    <property type="evidence" value="ECO:0007669"/>
    <property type="project" value="UniProtKB-UniRule"/>
</dbReference>
<dbReference type="HAMAP" id="MF_00454">
    <property type="entry name" value="FluC"/>
    <property type="match status" value="1"/>
</dbReference>
<dbReference type="InterPro" id="IPR003691">
    <property type="entry name" value="FluC"/>
</dbReference>
<dbReference type="PANTHER" id="PTHR28259">
    <property type="entry name" value="FLUORIDE EXPORT PROTEIN 1-RELATED"/>
    <property type="match status" value="1"/>
</dbReference>
<dbReference type="PANTHER" id="PTHR28259:SF1">
    <property type="entry name" value="FLUORIDE EXPORT PROTEIN 1-RELATED"/>
    <property type="match status" value="1"/>
</dbReference>
<dbReference type="Pfam" id="PF02537">
    <property type="entry name" value="CRCB"/>
    <property type="match status" value="1"/>
</dbReference>
<sequence>MLVLVGLAGAGAAVGALSRYGIMRLALPLNRWPLPIATLFINLTGALLLGWILTSSLPPNWQIFLGTGIMGGYTTFSTMINELVLLGRNHHQRVAWEYFGLSLVGGLVMVYLGTLI</sequence>
<comment type="function">
    <text evidence="1">Fluoride-specific ion channel. Important for reducing fluoride concentration in the cell, thus reducing its toxicity.</text>
</comment>
<comment type="catalytic activity">
    <reaction evidence="1">
        <text>fluoride(in) = fluoride(out)</text>
        <dbReference type="Rhea" id="RHEA:76159"/>
        <dbReference type="ChEBI" id="CHEBI:17051"/>
    </reaction>
    <physiologicalReaction direction="left-to-right" evidence="1">
        <dbReference type="Rhea" id="RHEA:76160"/>
    </physiologicalReaction>
</comment>
<comment type="activity regulation">
    <text evidence="1">Na(+) is not transported, but it plays an essential structural role and its presence is essential for fluoride channel function.</text>
</comment>
<comment type="subcellular location">
    <subcellularLocation>
        <location evidence="1">Cell membrane</location>
        <topology evidence="1">Multi-pass membrane protein</topology>
    </subcellularLocation>
</comment>
<comment type="similarity">
    <text evidence="1">Belongs to the fluoride channel Fluc/FEX (TC 1.A.43) family.</text>
</comment>
<accession>Q88ZT8</accession>
<accession>F9UT18</accession>
<organism>
    <name type="scientific">Lactiplantibacillus plantarum (strain ATCC BAA-793 / NCIMB 8826 / WCFS1)</name>
    <name type="common">Lactobacillus plantarum</name>
    <dbReference type="NCBI Taxonomy" id="220668"/>
    <lineage>
        <taxon>Bacteria</taxon>
        <taxon>Bacillati</taxon>
        <taxon>Bacillota</taxon>
        <taxon>Bacilli</taxon>
        <taxon>Lactobacillales</taxon>
        <taxon>Lactobacillaceae</taxon>
        <taxon>Lactiplantibacillus</taxon>
    </lineage>
</organism>